<accession>Q17R14</accession>
<reference key="1">
    <citation type="submission" date="2006-06" db="EMBL/GenBank/DDBJ databases">
        <authorList>
            <consortium name="NIH - Mammalian Gene Collection (MGC) project"/>
        </authorList>
    </citation>
    <scope>NUCLEOTIDE SEQUENCE [LARGE SCALE MRNA]</scope>
    <source>
        <strain>Hereford</strain>
        <tissue>Hypothalamus</tissue>
    </source>
</reference>
<evidence type="ECO:0000250" key="1">
    <source>
        <dbReference type="UniProtKB" id="F1PRN2"/>
    </source>
</evidence>
<evidence type="ECO:0000250" key="2">
    <source>
        <dbReference type="UniProtKB" id="O94832"/>
    </source>
</evidence>
<evidence type="ECO:0000250" key="3">
    <source>
        <dbReference type="UniProtKB" id="Q5SYD0"/>
    </source>
</evidence>
<evidence type="ECO:0000250" key="4">
    <source>
        <dbReference type="UniProtKB" id="Q63357"/>
    </source>
</evidence>
<evidence type="ECO:0000255" key="5"/>
<evidence type="ECO:0000255" key="6">
    <source>
        <dbReference type="PROSITE-ProRule" id="PRU00116"/>
    </source>
</evidence>
<evidence type="ECO:0000255" key="7">
    <source>
        <dbReference type="PROSITE-ProRule" id="PRU00782"/>
    </source>
</evidence>
<evidence type="ECO:0000255" key="8">
    <source>
        <dbReference type="PROSITE-ProRule" id="PRU01093"/>
    </source>
</evidence>
<evidence type="ECO:0000305" key="9"/>
<gene>
    <name type="primary">MYO1D</name>
</gene>
<proteinExistence type="evidence at transcript level"/>
<keyword id="KW-0007">Acetylation</keyword>
<keyword id="KW-0009">Actin-binding</keyword>
<keyword id="KW-0067">ATP-binding</keyword>
<keyword id="KW-0112">Calmodulin-binding</keyword>
<keyword id="KW-0966">Cell projection</keyword>
<keyword id="KW-0963">Cytoplasm</keyword>
<keyword id="KW-0967">Endosome</keyword>
<keyword id="KW-0505">Motor protein</keyword>
<keyword id="KW-0518">Myosin</keyword>
<keyword id="KW-0547">Nucleotide-binding</keyword>
<keyword id="KW-0597">Phosphoprotein</keyword>
<keyword id="KW-0653">Protein transport</keyword>
<keyword id="KW-1185">Reference proteome</keyword>
<keyword id="KW-0677">Repeat</keyword>
<keyword id="KW-0813">Transport</keyword>
<organism>
    <name type="scientific">Bos taurus</name>
    <name type="common">Bovine</name>
    <dbReference type="NCBI Taxonomy" id="9913"/>
    <lineage>
        <taxon>Eukaryota</taxon>
        <taxon>Metazoa</taxon>
        <taxon>Chordata</taxon>
        <taxon>Craniata</taxon>
        <taxon>Vertebrata</taxon>
        <taxon>Euteleostomi</taxon>
        <taxon>Mammalia</taxon>
        <taxon>Eutheria</taxon>
        <taxon>Laurasiatheria</taxon>
        <taxon>Artiodactyla</taxon>
        <taxon>Ruminantia</taxon>
        <taxon>Pecora</taxon>
        <taxon>Bovidae</taxon>
        <taxon>Bovinae</taxon>
        <taxon>Bos</taxon>
    </lineage>
</organism>
<sequence length="1006" mass="115939">MAEQESLEFGKADFVLMDTVSMPEFMANLRLRFEKGRIYTFIGEVVVSVNPYKSLNIYGRDTIEQYKGRELYERPPHLFAIADAAYKAMKRRSKDTCIVISGESGAGKTEASKYIMQYIAAITNPSQRAEIERVKNMLLKSNCVLEAFGNAKTNRNDNSSRFGKYMDINFDFKGDPIGGHINNYLLEKSRVIVQQPGERSFHSFYQLLQGGSDQMLRSLHLQKSLSSYSYIHVGAQLKSSINDAAEFKVVADAMKVIGFKPEEIQTAYKILAAILHLGNLKFVVDGDTTLIEDGKLVSIIAELLSTKTDMVEKALLYRTVATGRDVIDKQHTEQEASYGRDAFAKAIYERLFCWIVSRINDIIAVKNSDTTIHGKNTVIGVLDIYGFEIFDNNSFEQFCINYCNEKLQQLFIQLVLKQEQEEYQREGIPWKHIDYFNNQIIVDLVEQQHKGIIAILDDACMNVGKVTDEMFLEALNSKLGKHGHFSSRKLCASDKILEFDRDFRIRHYAGDVVYSVVGFIDKNKDTLFQDFKRLMYNSSNPVLKNMWPEGKLSITEVTRRPLTAATLFKNSMIALVDNLASKEPYYVRCIKPNDMKSPQIFDDERCRHQVEYLGLLENVRVRRAGFAFRQTYEKFLHRYKMISEFTWPNHDLPSDKEAVKKLVEYCGFQDDVAYGKTKIFIRTPRTLFTLEELRAQMLVRIVLFLQKVWRGTLARMRYKRTKAALTIIRYYRRYKVKSYIHEVARRFHGIKTMRDYGKHVQWPTPPKVLHRFEEVLQAVFNRWRASQLIKTIPASDLPQVRAKVAAVEMLKGQRADLGLQRAWEGNYLASKPDTPQTSGTFVPVANELKRKDKYMNVLFSCHVRKVNRFSKVEDRAIFVTDRHLYKMDPTKQYKVMKTIPLYNLTGLSVSNGKDQLVVFHTKDNKDLIVCLFSKQPTHESRIGELVGVLVNHFKSEKRHLQVNVTNPVQCSLHGKKCTVSVETRLNQPQPDFTKNRSGFILSVPGN</sequence>
<comment type="function">
    <text evidence="1 4">Unconventional myosin that functions as actin-based motor protein with ATPase activity (By similarity). Plays a role in endosomal protein trafficking, and especially in the transfer of cargo proteins from early to recycling endosomes (By similarity). Required for normal planar cell polarity in ciliated tracheal cells, for normal rotational polarity of cilia, and for coordinated, unidirectional ciliary movement in the trachea. Required for normal, polarized cilia organization in brain ependymal epithelial cells (By similarity).</text>
</comment>
<comment type="subunit">
    <text evidence="4">Interacts (via the two IQ motifs) with calmodulin. Binds an additional calmodulin chain via a third, C-terminal region. Interacts with F-actin.</text>
</comment>
<comment type="subcellular location">
    <subcellularLocation>
        <location evidence="4">Cytoplasm</location>
    </subcellularLocation>
    <subcellularLocation>
        <location evidence="4">Perikaryon</location>
    </subcellularLocation>
    <subcellularLocation>
        <location evidence="4">Cell projection</location>
        <location evidence="4">Dendrite</location>
    </subcellularLocation>
    <subcellularLocation>
        <location evidence="1">Early endosome</location>
    </subcellularLocation>
    <subcellularLocation>
        <location evidence="4">Cytoplasm</location>
        <location evidence="4">Cell cortex</location>
    </subcellularLocation>
    <text evidence="4">Colocalizes with the actin cytoskeleton in the cell cortex close to the apical cell membrane. Colocalizes with cytoplasmic puncta that are reminiscent of transport vesicles.</text>
</comment>
<comment type="domain">
    <text evidence="4">Binds a calmodulin chain via each of the two IQ domains. IQ domain 1 mediates interaction with calmodulin both in the presence and in the absence of Ca(2+). IQ domain 2 mediates interaction with calmodulin in the presence of Ca(2+).</text>
</comment>
<comment type="domain">
    <text evidence="4">The TH1 domain is required for activity in complementing zebrafish defects in Kupffer's vesicle lumen size.</text>
</comment>
<comment type="similarity">
    <text evidence="9">Belongs to the TRAFAC class myosin-kinesin ATPase superfamily. Myosin family.</text>
</comment>
<comment type="caution">
    <text evidence="4">Contrary to the situation in zebrafish, xenopus and drosophila, mammalian MYO1D defects have no effects on left-right body asymmetry.</text>
</comment>
<comment type="caution">
    <text evidence="9">Represents an unconventional myosin. This protein should not be confused with the conventional myosin-1 (MYH1).</text>
</comment>
<protein>
    <recommendedName>
        <fullName>Unconventional myosin-Id</fullName>
    </recommendedName>
</protein>
<name>MYO1D_BOVIN</name>
<feature type="initiator methionine" description="Removed" evidence="2">
    <location>
        <position position="1"/>
    </location>
</feature>
<feature type="chain" id="PRO_0000274173" description="Unconventional myosin-Id">
    <location>
        <begin position="2"/>
        <end position="1006"/>
    </location>
</feature>
<feature type="domain" description="Myosin motor" evidence="7">
    <location>
        <begin position="9"/>
        <end position="695"/>
    </location>
</feature>
<feature type="domain" description="IQ 1" evidence="6">
    <location>
        <begin position="699"/>
        <end position="719"/>
    </location>
</feature>
<feature type="domain" description="IQ 2" evidence="6">
    <location>
        <begin position="721"/>
        <end position="741"/>
    </location>
</feature>
<feature type="domain" description="TH1" evidence="8">
    <location>
        <begin position="812"/>
        <end position="1005"/>
    </location>
</feature>
<feature type="region of interest" description="Actin-binding" evidence="7">
    <location>
        <begin position="572"/>
        <end position="594"/>
    </location>
</feature>
<feature type="binding site" evidence="5">
    <location>
        <begin position="102"/>
        <end position="109"/>
    </location>
    <ligand>
        <name>ATP</name>
        <dbReference type="ChEBI" id="CHEBI:30616"/>
    </ligand>
</feature>
<feature type="modified residue" description="N-acetylalanine" evidence="2">
    <location>
        <position position="2"/>
    </location>
</feature>
<feature type="modified residue" description="Phosphoserine" evidence="2">
    <location>
        <position position="200"/>
    </location>
</feature>
<feature type="modified residue" description="Phosphotyrosine" evidence="3">
    <location>
        <position position="536"/>
    </location>
</feature>
<dbReference type="EMBL" id="BC118080">
    <property type="protein sequence ID" value="AAI18081.1"/>
    <property type="molecule type" value="mRNA"/>
</dbReference>
<dbReference type="RefSeq" id="NP_001069306.1">
    <property type="nucleotide sequence ID" value="NM_001075838.2"/>
</dbReference>
<dbReference type="SMR" id="Q17R14"/>
<dbReference type="FunCoup" id="Q17R14">
    <property type="interactions" value="885"/>
</dbReference>
<dbReference type="STRING" id="9913.ENSBTAP00000020634"/>
<dbReference type="PaxDb" id="9913-ENSBTAP00000020634"/>
<dbReference type="GeneID" id="522967"/>
<dbReference type="KEGG" id="bta:522967"/>
<dbReference type="CTD" id="4642"/>
<dbReference type="eggNOG" id="KOG0164">
    <property type="taxonomic scope" value="Eukaryota"/>
</dbReference>
<dbReference type="InParanoid" id="Q17R14"/>
<dbReference type="OrthoDB" id="6108017at2759"/>
<dbReference type="Proteomes" id="UP000009136">
    <property type="component" value="Unplaced"/>
</dbReference>
<dbReference type="GO" id="GO:0015629">
    <property type="term" value="C:actin cytoskeleton"/>
    <property type="evidence" value="ECO:0000318"/>
    <property type="project" value="GO_Central"/>
</dbReference>
<dbReference type="GO" id="GO:0097440">
    <property type="term" value="C:apical dendrite"/>
    <property type="evidence" value="ECO:0000250"/>
    <property type="project" value="UniProtKB"/>
</dbReference>
<dbReference type="GO" id="GO:0030673">
    <property type="term" value="C:axolemma"/>
    <property type="evidence" value="ECO:0000250"/>
    <property type="project" value="UniProtKB"/>
</dbReference>
<dbReference type="GO" id="GO:0030424">
    <property type="term" value="C:axon"/>
    <property type="evidence" value="ECO:0000250"/>
    <property type="project" value="UniProtKB"/>
</dbReference>
<dbReference type="GO" id="GO:0016323">
    <property type="term" value="C:basolateral plasma membrane"/>
    <property type="evidence" value="ECO:0000250"/>
    <property type="project" value="UniProtKB"/>
</dbReference>
<dbReference type="GO" id="GO:0005903">
    <property type="term" value="C:brush border"/>
    <property type="evidence" value="ECO:0000250"/>
    <property type="project" value="UniProtKB"/>
</dbReference>
<dbReference type="GO" id="GO:0005938">
    <property type="term" value="C:cell cortex"/>
    <property type="evidence" value="ECO:0007669"/>
    <property type="project" value="UniProtKB-SubCell"/>
</dbReference>
<dbReference type="GO" id="GO:0005737">
    <property type="term" value="C:cytoplasm"/>
    <property type="evidence" value="ECO:0000318"/>
    <property type="project" value="GO_Central"/>
</dbReference>
<dbReference type="GO" id="GO:0031410">
    <property type="term" value="C:cytoplasmic vesicle"/>
    <property type="evidence" value="ECO:0000250"/>
    <property type="project" value="UniProtKB"/>
</dbReference>
<dbReference type="GO" id="GO:0005769">
    <property type="term" value="C:early endosome"/>
    <property type="evidence" value="ECO:0007669"/>
    <property type="project" value="UniProtKB-SubCell"/>
</dbReference>
<dbReference type="GO" id="GO:0005768">
    <property type="term" value="C:endosome"/>
    <property type="evidence" value="ECO:0000250"/>
    <property type="project" value="UniProtKB"/>
</dbReference>
<dbReference type="GO" id="GO:0005902">
    <property type="term" value="C:microvillus"/>
    <property type="evidence" value="ECO:0000318"/>
    <property type="project" value="GO_Central"/>
</dbReference>
<dbReference type="GO" id="GO:0043209">
    <property type="term" value="C:myelin sheath"/>
    <property type="evidence" value="ECO:0000250"/>
    <property type="project" value="UniProtKB"/>
</dbReference>
<dbReference type="GO" id="GO:0016459">
    <property type="term" value="C:myosin complex"/>
    <property type="evidence" value="ECO:0000250"/>
    <property type="project" value="UniProtKB"/>
</dbReference>
<dbReference type="GO" id="GO:0043005">
    <property type="term" value="C:neuron projection"/>
    <property type="evidence" value="ECO:0000250"/>
    <property type="project" value="UniProtKB"/>
</dbReference>
<dbReference type="GO" id="GO:0043025">
    <property type="term" value="C:neuronal cell body"/>
    <property type="evidence" value="ECO:0000250"/>
    <property type="project" value="UniProtKB"/>
</dbReference>
<dbReference type="GO" id="GO:0043204">
    <property type="term" value="C:perikaryon"/>
    <property type="evidence" value="ECO:0007669"/>
    <property type="project" value="UniProtKB-SubCell"/>
</dbReference>
<dbReference type="GO" id="GO:0005886">
    <property type="term" value="C:plasma membrane"/>
    <property type="evidence" value="ECO:0000318"/>
    <property type="project" value="GO_Central"/>
</dbReference>
<dbReference type="GO" id="GO:0051015">
    <property type="term" value="F:actin filament binding"/>
    <property type="evidence" value="ECO:0000250"/>
    <property type="project" value="UniProtKB"/>
</dbReference>
<dbReference type="GO" id="GO:0005524">
    <property type="term" value="F:ATP binding"/>
    <property type="evidence" value="ECO:0007669"/>
    <property type="project" value="UniProtKB-KW"/>
</dbReference>
<dbReference type="GO" id="GO:0048306">
    <property type="term" value="F:calcium-dependent protein binding"/>
    <property type="evidence" value="ECO:0000250"/>
    <property type="project" value="UniProtKB"/>
</dbReference>
<dbReference type="GO" id="GO:0005516">
    <property type="term" value="F:calmodulin binding"/>
    <property type="evidence" value="ECO:0000250"/>
    <property type="project" value="UniProtKB"/>
</dbReference>
<dbReference type="GO" id="GO:0000146">
    <property type="term" value="F:microfilament motor activity"/>
    <property type="evidence" value="ECO:0000250"/>
    <property type="project" value="UniProtKB"/>
</dbReference>
<dbReference type="GO" id="GO:0007015">
    <property type="term" value="P:actin filament organization"/>
    <property type="evidence" value="ECO:0000318"/>
    <property type="project" value="GO_Central"/>
</dbReference>
<dbReference type="GO" id="GO:0030048">
    <property type="term" value="P:actin filament-based movement"/>
    <property type="evidence" value="ECO:0000318"/>
    <property type="project" value="GO_Central"/>
</dbReference>
<dbReference type="GO" id="GO:0061502">
    <property type="term" value="P:early endosome to recycling endosome transport"/>
    <property type="evidence" value="ECO:0000250"/>
    <property type="project" value="UniProtKB"/>
</dbReference>
<dbReference type="GO" id="GO:0006897">
    <property type="term" value="P:endocytosis"/>
    <property type="evidence" value="ECO:0000318"/>
    <property type="project" value="GO_Central"/>
</dbReference>
<dbReference type="GO" id="GO:0015031">
    <property type="term" value="P:protein transport"/>
    <property type="evidence" value="ECO:0007669"/>
    <property type="project" value="UniProtKB-KW"/>
</dbReference>
<dbReference type="CDD" id="cd01378">
    <property type="entry name" value="MYSc_Myo1"/>
    <property type="match status" value="1"/>
</dbReference>
<dbReference type="FunFam" id="1.20.5.4820:FF:000003">
    <property type="entry name" value="Unconventional myosin ID"/>
    <property type="match status" value="1"/>
</dbReference>
<dbReference type="FunFam" id="1.20.58.530:FF:000004">
    <property type="entry name" value="Unconventional myosin ID"/>
    <property type="match status" value="1"/>
</dbReference>
<dbReference type="FunFam" id="1.20.120.720:FF:000009">
    <property type="entry name" value="Unconventional myosin-Id"/>
    <property type="match status" value="1"/>
</dbReference>
<dbReference type="FunFam" id="1.10.10.820:FF:000007">
    <property type="entry name" value="unconventional myosin-Id"/>
    <property type="match status" value="1"/>
</dbReference>
<dbReference type="Gene3D" id="1.10.10.820">
    <property type="match status" value="1"/>
</dbReference>
<dbReference type="Gene3D" id="1.20.5.4820">
    <property type="match status" value="1"/>
</dbReference>
<dbReference type="Gene3D" id="1.20.58.530">
    <property type="match status" value="1"/>
</dbReference>
<dbReference type="Gene3D" id="3.40.850.10">
    <property type="entry name" value="Kinesin motor domain"/>
    <property type="match status" value="1"/>
</dbReference>
<dbReference type="Gene3D" id="1.20.120.720">
    <property type="entry name" value="Myosin VI head, motor domain, U50 subdomain"/>
    <property type="match status" value="1"/>
</dbReference>
<dbReference type="InterPro" id="IPR000048">
    <property type="entry name" value="IQ_motif_EF-hand-BS"/>
</dbReference>
<dbReference type="InterPro" id="IPR036961">
    <property type="entry name" value="Kinesin_motor_dom_sf"/>
</dbReference>
<dbReference type="InterPro" id="IPR001609">
    <property type="entry name" value="Myosin_head_motor_dom-like"/>
</dbReference>
<dbReference type="InterPro" id="IPR010926">
    <property type="entry name" value="Myosin_TH1"/>
</dbReference>
<dbReference type="InterPro" id="IPR036072">
    <property type="entry name" value="MYSc_Myo1"/>
</dbReference>
<dbReference type="InterPro" id="IPR027417">
    <property type="entry name" value="P-loop_NTPase"/>
</dbReference>
<dbReference type="PANTHER" id="PTHR13140">
    <property type="entry name" value="MYOSIN"/>
    <property type="match status" value="1"/>
</dbReference>
<dbReference type="PANTHER" id="PTHR13140:SF417">
    <property type="entry name" value="UNCONVENTIONAL MYOSIN-ID"/>
    <property type="match status" value="1"/>
</dbReference>
<dbReference type="Pfam" id="PF00612">
    <property type="entry name" value="IQ"/>
    <property type="match status" value="1"/>
</dbReference>
<dbReference type="Pfam" id="PF00063">
    <property type="entry name" value="Myosin_head"/>
    <property type="match status" value="1"/>
</dbReference>
<dbReference type="Pfam" id="PF06017">
    <property type="entry name" value="Myosin_TH1"/>
    <property type="match status" value="1"/>
</dbReference>
<dbReference type="PRINTS" id="PR00193">
    <property type="entry name" value="MYOSINHEAVY"/>
</dbReference>
<dbReference type="SMART" id="SM00015">
    <property type="entry name" value="IQ"/>
    <property type="match status" value="1"/>
</dbReference>
<dbReference type="SMART" id="SM00242">
    <property type="entry name" value="MYSc"/>
    <property type="match status" value="1"/>
</dbReference>
<dbReference type="SUPFAM" id="SSF52540">
    <property type="entry name" value="P-loop containing nucleoside triphosphate hydrolases"/>
    <property type="match status" value="1"/>
</dbReference>
<dbReference type="PROSITE" id="PS50096">
    <property type="entry name" value="IQ"/>
    <property type="match status" value="1"/>
</dbReference>
<dbReference type="PROSITE" id="PS51456">
    <property type="entry name" value="MYOSIN_MOTOR"/>
    <property type="match status" value="1"/>
</dbReference>
<dbReference type="PROSITE" id="PS51757">
    <property type="entry name" value="TH1"/>
    <property type="match status" value="1"/>
</dbReference>